<reference key="1">
    <citation type="journal article" date="2005" name="Nat. Genet.">
        <title>The complete genome sequence of Francisella tularensis, the causative agent of tularemia.</title>
        <authorList>
            <person name="Larsson P."/>
            <person name="Oyston P.C.F."/>
            <person name="Chain P."/>
            <person name="Chu M.C."/>
            <person name="Duffield M."/>
            <person name="Fuxelius H.-H."/>
            <person name="Garcia E."/>
            <person name="Haelltorp G."/>
            <person name="Johansson D."/>
            <person name="Isherwood K.E."/>
            <person name="Karp P.D."/>
            <person name="Larsson E."/>
            <person name="Liu Y."/>
            <person name="Michell S."/>
            <person name="Prior J."/>
            <person name="Prior R."/>
            <person name="Malfatti S."/>
            <person name="Sjoestedt A."/>
            <person name="Svensson K."/>
            <person name="Thompson N."/>
            <person name="Vergez L."/>
            <person name="Wagg J.K."/>
            <person name="Wren B.W."/>
            <person name="Lindler L.E."/>
            <person name="Andersson S.G.E."/>
            <person name="Forsman M."/>
            <person name="Titball R.W."/>
        </authorList>
    </citation>
    <scope>NUCLEOTIDE SEQUENCE [LARGE SCALE GENOMIC DNA]</scope>
    <source>
        <strain>SCHU S4 / Schu 4</strain>
    </source>
</reference>
<protein>
    <recommendedName>
        <fullName evidence="1">Isoleucine--tRNA ligase</fullName>
        <ecNumber evidence="1">6.1.1.5</ecNumber>
    </recommendedName>
    <alternativeName>
        <fullName evidence="1">Isoleucyl-tRNA synthetase</fullName>
        <shortName evidence="1">IleRS</shortName>
    </alternativeName>
</protein>
<sequence>MSDYKDTLNLPKTSFSMKGNLANKEPMILNKWEKQGIYKKIREHFAGREKFVLHDGPPYANGSIHVGHAVNKILKDIIIKSKTLSGYDAPFTPTWDCHGLPIELQVEKKHGKAGQSISEDDFRKECRKYAKKQVEIQKKDFKRLGVLGDWEQPYLTINFDYEANMIRTLAKIIENGHLSKGFKPVHWCTDCGSALAEAEVEYADKVSPAIDVKFKIKDKDKLAQAFGLDSLNHDAFAIIWTTTPWTLPANQAIAVNNQLNYSLIKIEDFYIILAENLVEQTLKRYAIENAQIIATTTGNKLTGIMAEHPFYSRHVPILHGDHVTDDSGTGLVHTAPTHGVDDFTLGKEHNLSMEIFVKGNGCYSENTKLFAGEFIFKANDRIIELLGEKKRLMNSDKIKHSYPHCWRHKTPLMFRATPQWFISMEKQGLRDKALQAIKETSWAPSWGQARIEGMVKDRPDWCISRQRTWGVPLPLFIHKETEELHPNTIEILHKVAEKIEKDGIEAWFNADDCEFITETAQYKSVKDTLDVWFDSGSSSMCILDLDKRLSYPADLYLEGSDQHRGWFQTSLLVAMSAKGSQPYKEVFTHGFVVDEHGRKMSKSLGNVTSPQDIYNTLGADILRLWTASTDYKSEMAVSDQILKRTADTYRRLRNTARFLLSNLDGFNPVTDIIEFDKLVKLDQWAIAKTKEFQDKIIEVYDKYQTHTVAQLIHHFCSIEMGSFYLDIIKDRQYTAKTDGHPRKSAQTAIYHIVHALVRWMAPILSFTADEIWDATPKTTDLPIQLCEWYTGLKSFDQDAELDLEYWAKIQEIRSEVNRVLEIKRNEDVIKASLEAEITIYADKYNYNLLEKLGNELRFLLISSKADLKVIEESTSSSIAANIPGLLIEITKIEEPKCERCWHRSSTVGDNPQYKDICSRCVENITTEAGESREFA</sequence>
<keyword id="KW-0030">Aminoacyl-tRNA synthetase</keyword>
<keyword id="KW-0067">ATP-binding</keyword>
<keyword id="KW-0963">Cytoplasm</keyword>
<keyword id="KW-0436">Ligase</keyword>
<keyword id="KW-0479">Metal-binding</keyword>
<keyword id="KW-0547">Nucleotide-binding</keyword>
<keyword id="KW-0648">Protein biosynthesis</keyword>
<keyword id="KW-1185">Reference proteome</keyword>
<keyword id="KW-0862">Zinc</keyword>
<evidence type="ECO:0000255" key="1">
    <source>
        <dbReference type="HAMAP-Rule" id="MF_02002"/>
    </source>
</evidence>
<proteinExistence type="inferred from homology"/>
<comment type="function">
    <text evidence="1">Catalyzes the attachment of isoleucine to tRNA(Ile). As IleRS can inadvertently accommodate and process structurally similar amino acids such as valine, to avoid such errors it has two additional distinct tRNA(Ile)-dependent editing activities. One activity is designated as 'pretransfer' editing and involves the hydrolysis of activated Val-AMP. The other activity is designated 'posttransfer' editing and involves deacylation of mischarged Val-tRNA(Ile).</text>
</comment>
<comment type="catalytic activity">
    <reaction evidence="1">
        <text>tRNA(Ile) + L-isoleucine + ATP = L-isoleucyl-tRNA(Ile) + AMP + diphosphate</text>
        <dbReference type="Rhea" id="RHEA:11060"/>
        <dbReference type="Rhea" id="RHEA-COMP:9666"/>
        <dbReference type="Rhea" id="RHEA-COMP:9695"/>
        <dbReference type="ChEBI" id="CHEBI:30616"/>
        <dbReference type="ChEBI" id="CHEBI:33019"/>
        <dbReference type="ChEBI" id="CHEBI:58045"/>
        <dbReference type="ChEBI" id="CHEBI:78442"/>
        <dbReference type="ChEBI" id="CHEBI:78528"/>
        <dbReference type="ChEBI" id="CHEBI:456215"/>
        <dbReference type="EC" id="6.1.1.5"/>
    </reaction>
</comment>
<comment type="cofactor">
    <cofactor evidence="1">
        <name>Zn(2+)</name>
        <dbReference type="ChEBI" id="CHEBI:29105"/>
    </cofactor>
    <text evidence="1">Binds 1 zinc ion per subunit.</text>
</comment>
<comment type="subunit">
    <text evidence="1">Monomer.</text>
</comment>
<comment type="subcellular location">
    <subcellularLocation>
        <location evidence="1">Cytoplasm</location>
    </subcellularLocation>
</comment>
<comment type="domain">
    <text evidence="1">IleRS has two distinct active sites: one for aminoacylation and one for editing. The misactivated valine is translocated from the active site to the editing site, which sterically excludes the correctly activated isoleucine. The single editing site contains two valyl binding pockets, one specific for each substrate (Val-AMP or Val-tRNA(Ile)).</text>
</comment>
<comment type="similarity">
    <text evidence="1">Belongs to the class-I aminoacyl-tRNA synthetase family. IleS type 1 subfamily.</text>
</comment>
<name>SYI_FRATT</name>
<accession>Q5NGD0</accession>
<dbReference type="EC" id="6.1.1.5" evidence="1"/>
<dbReference type="EMBL" id="AJ749949">
    <property type="protein sequence ID" value="CAG45548.1"/>
    <property type="molecule type" value="Genomic_DNA"/>
</dbReference>
<dbReference type="RefSeq" id="WP_003020930.1">
    <property type="nucleotide sequence ID" value="NC_006570.2"/>
</dbReference>
<dbReference type="RefSeq" id="YP_169912.1">
    <property type="nucleotide sequence ID" value="NC_006570.2"/>
</dbReference>
<dbReference type="SMR" id="Q5NGD0"/>
<dbReference type="IntAct" id="Q5NGD0">
    <property type="interactions" value="2"/>
</dbReference>
<dbReference type="STRING" id="177416.FTT_0915c"/>
<dbReference type="EnsemblBacteria" id="CAG45548">
    <property type="protein sequence ID" value="CAG45548"/>
    <property type="gene ID" value="FTT_0915c"/>
</dbReference>
<dbReference type="KEGG" id="ftu:FTT_0915c"/>
<dbReference type="eggNOG" id="COG0060">
    <property type="taxonomic scope" value="Bacteria"/>
</dbReference>
<dbReference type="OrthoDB" id="9810365at2"/>
<dbReference type="Proteomes" id="UP000001174">
    <property type="component" value="Chromosome"/>
</dbReference>
<dbReference type="GO" id="GO:0005829">
    <property type="term" value="C:cytosol"/>
    <property type="evidence" value="ECO:0007669"/>
    <property type="project" value="TreeGrafter"/>
</dbReference>
<dbReference type="GO" id="GO:0002161">
    <property type="term" value="F:aminoacyl-tRNA deacylase activity"/>
    <property type="evidence" value="ECO:0007669"/>
    <property type="project" value="InterPro"/>
</dbReference>
<dbReference type="GO" id="GO:0005524">
    <property type="term" value="F:ATP binding"/>
    <property type="evidence" value="ECO:0007669"/>
    <property type="project" value="UniProtKB-UniRule"/>
</dbReference>
<dbReference type="GO" id="GO:0004822">
    <property type="term" value="F:isoleucine-tRNA ligase activity"/>
    <property type="evidence" value="ECO:0007669"/>
    <property type="project" value="UniProtKB-UniRule"/>
</dbReference>
<dbReference type="GO" id="GO:0000049">
    <property type="term" value="F:tRNA binding"/>
    <property type="evidence" value="ECO:0007669"/>
    <property type="project" value="InterPro"/>
</dbReference>
<dbReference type="GO" id="GO:0008270">
    <property type="term" value="F:zinc ion binding"/>
    <property type="evidence" value="ECO:0007669"/>
    <property type="project" value="UniProtKB-UniRule"/>
</dbReference>
<dbReference type="GO" id="GO:0006428">
    <property type="term" value="P:isoleucyl-tRNA aminoacylation"/>
    <property type="evidence" value="ECO:0007669"/>
    <property type="project" value="UniProtKB-UniRule"/>
</dbReference>
<dbReference type="CDD" id="cd07960">
    <property type="entry name" value="Anticodon_Ia_Ile_BEm"/>
    <property type="match status" value="1"/>
</dbReference>
<dbReference type="CDD" id="cd00818">
    <property type="entry name" value="IleRS_core"/>
    <property type="match status" value="1"/>
</dbReference>
<dbReference type="FunFam" id="1.10.730.20:FF:000001">
    <property type="entry name" value="Isoleucine--tRNA ligase"/>
    <property type="match status" value="1"/>
</dbReference>
<dbReference type="FunFam" id="3.40.50.620:FF:000042">
    <property type="entry name" value="Isoleucine--tRNA ligase"/>
    <property type="match status" value="1"/>
</dbReference>
<dbReference type="FunFam" id="3.40.50.620:FF:000048">
    <property type="entry name" value="Isoleucine--tRNA ligase"/>
    <property type="match status" value="1"/>
</dbReference>
<dbReference type="Gene3D" id="1.10.730.20">
    <property type="match status" value="1"/>
</dbReference>
<dbReference type="Gene3D" id="3.40.50.620">
    <property type="entry name" value="HUPs"/>
    <property type="match status" value="2"/>
</dbReference>
<dbReference type="Gene3D" id="3.90.740.10">
    <property type="entry name" value="Valyl/Leucyl/Isoleucyl-tRNA synthetase, editing domain"/>
    <property type="match status" value="1"/>
</dbReference>
<dbReference type="HAMAP" id="MF_02002">
    <property type="entry name" value="Ile_tRNA_synth_type1"/>
    <property type="match status" value="1"/>
</dbReference>
<dbReference type="InterPro" id="IPR001412">
    <property type="entry name" value="aa-tRNA-synth_I_CS"/>
</dbReference>
<dbReference type="InterPro" id="IPR002300">
    <property type="entry name" value="aa-tRNA-synth_Ia"/>
</dbReference>
<dbReference type="InterPro" id="IPR033708">
    <property type="entry name" value="Anticodon_Ile_BEm"/>
</dbReference>
<dbReference type="InterPro" id="IPR002301">
    <property type="entry name" value="Ile-tRNA-ligase"/>
</dbReference>
<dbReference type="InterPro" id="IPR023585">
    <property type="entry name" value="Ile-tRNA-ligase_type1"/>
</dbReference>
<dbReference type="InterPro" id="IPR050081">
    <property type="entry name" value="Ile-tRNA_ligase"/>
</dbReference>
<dbReference type="InterPro" id="IPR013155">
    <property type="entry name" value="M/V/L/I-tRNA-synth_anticd-bd"/>
</dbReference>
<dbReference type="InterPro" id="IPR014729">
    <property type="entry name" value="Rossmann-like_a/b/a_fold"/>
</dbReference>
<dbReference type="InterPro" id="IPR009080">
    <property type="entry name" value="tRNAsynth_Ia_anticodon-bd"/>
</dbReference>
<dbReference type="InterPro" id="IPR009008">
    <property type="entry name" value="Val/Leu/Ile-tRNA-synth_edit"/>
</dbReference>
<dbReference type="InterPro" id="IPR010663">
    <property type="entry name" value="Znf_FPG/IleRS"/>
</dbReference>
<dbReference type="NCBIfam" id="TIGR00392">
    <property type="entry name" value="ileS"/>
    <property type="match status" value="1"/>
</dbReference>
<dbReference type="PANTHER" id="PTHR42765:SF1">
    <property type="entry name" value="ISOLEUCINE--TRNA LIGASE, MITOCHONDRIAL"/>
    <property type="match status" value="1"/>
</dbReference>
<dbReference type="PANTHER" id="PTHR42765">
    <property type="entry name" value="SOLEUCYL-TRNA SYNTHETASE"/>
    <property type="match status" value="1"/>
</dbReference>
<dbReference type="Pfam" id="PF08264">
    <property type="entry name" value="Anticodon_1"/>
    <property type="match status" value="1"/>
</dbReference>
<dbReference type="Pfam" id="PF00133">
    <property type="entry name" value="tRNA-synt_1"/>
    <property type="match status" value="1"/>
</dbReference>
<dbReference type="Pfam" id="PF06827">
    <property type="entry name" value="zf-FPG_IleRS"/>
    <property type="match status" value="1"/>
</dbReference>
<dbReference type="PRINTS" id="PR00984">
    <property type="entry name" value="TRNASYNTHILE"/>
</dbReference>
<dbReference type="SUPFAM" id="SSF47323">
    <property type="entry name" value="Anticodon-binding domain of a subclass of class I aminoacyl-tRNA synthetases"/>
    <property type="match status" value="1"/>
</dbReference>
<dbReference type="SUPFAM" id="SSF52374">
    <property type="entry name" value="Nucleotidylyl transferase"/>
    <property type="match status" value="1"/>
</dbReference>
<dbReference type="SUPFAM" id="SSF50677">
    <property type="entry name" value="ValRS/IleRS/LeuRS editing domain"/>
    <property type="match status" value="1"/>
</dbReference>
<dbReference type="PROSITE" id="PS00178">
    <property type="entry name" value="AA_TRNA_LIGASE_I"/>
    <property type="match status" value="1"/>
</dbReference>
<organism>
    <name type="scientific">Francisella tularensis subsp. tularensis (strain SCHU S4 / Schu 4)</name>
    <dbReference type="NCBI Taxonomy" id="177416"/>
    <lineage>
        <taxon>Bacteria</taxon>
        <taxon>Pseudomonadati</taxon>
        <taxon>Pseudomonadota</taxon>
        <taxon>Gammaproteobacteria</taxon>
        <taxon>Thiotrichales</taxon>
        <taxon>Francisellaceae</taxon>
        <taxon>Francisella</taxon>
    </lineage>
</organism>
<feature type="chain" id="PRO_0000098388" description="Isoleucine--tRNA ligase">
    <location>
        <begin position="1"/>
        <end position="935"/>
    </location>
</feature>
<feature type="short sequence motif" description="'HIGH' region">
    <location>
        <begin position="58"/>
        <end position="68"/>
    </location>
</feature>
<feature type="short sequence motif" description="'KMSKS' region">
    <location>
        <begin position="599"/>
        <end position="603"/>
    </location>
</feature>
<feature type="binding site" evidence="1">
    <location>
        <position position="558"/>
    </location>
    <ligand>
        <name>L-isoleucyl-5'-AMP</name>
        <dbReference type="ChEBI" id="CHEBI:178002"/>
    </ligand>
</feature>
<feature type="binding site" evidence="1">
    <location>
        <position position="602"/>
    </location>
    <ligand>
        <name>ATP</name>
        <dbReference type="ChEBI" id="CHEBI:30616"/>
    </ligand>
</feature>
<feature type="binding site" evidence="1">
    <location>
        <position position="897"/>
    </location>
    <ligand>
        <name>Zn(2+)</name>
        <dbReference type="ChEBI" id="CHEBI:29105"/>
    </ligand>
</feature>
<feature type="binding site" evidence="1">
    <location>
        <position position="900"/>
    </location>
    <ligand>
        <name>Zn(2+)</name>
        <dbReference type="ChEBI" id="CHEBI:29105"/>
    </ligand>
</feature>
<feature type="binding site" evidence="1">
    <location>
        <position position="917"/>
    </location>
    <ligand>
        <name>Zn(2+)</name>
        <dbReference type="ChEBI" id="CHEBI:29105"/>
    </ligand>
</feature>
<feature type="binding site" evidence="1">
    <location>
        <position position="920"/>
    </location>
    <ligand>
        <name>Zn(2+)</name>
        <dbReference type="ChEBI" id="CHEBI:29105"/>
    </ligand>
</feature>
<gene>
    <name evidence="1" type="primary">ileS</name>
    <name type="ordered locus">FTT_0915c</name>
</gene>